<proteinExistence type="evidence at protein level"/>
<protein>
    <recommendedName>
        <fullName>Calmodulin-1</fullName>
        <shortName>CaM-1</shortName>
    </recommendedName>
</protein>
<evidence type="ECO:0000250" key="1"/>
<evidence type="ECO:0000255" key="2">
    <source>
        <dbReference type="PROSITE-ProRule" id="PRU00448"/>
    </source>
</evidence>
<evidence type="ECO:0000269" key="3">
    <source>
    </source>
</evidence>
<evidence type="ECO:0000305" key="4"/>
<keyword id="KW-0007">Acetylation</keyword>
<keyword id="KW-0106">Calcium</keyword>
<keyword id="KW-0479">Metal-binding</keyword>
<keyword id="KW-0488">Methylation</keyword>
<keyword id="KW-1185">Reference proteome</keyword>
<keyword id="KW-0677">Repeat</keyword>
<gene>
    <name type="primary">CAM1-1</name>
    <name type="ORF">OsI_011021</name>
</gene>
<gene>
    <name type="primary">CAM1-2</name>
    <name type="ORF">OsI_026430</name>
</gene>
<gene>
    <name type="primary">CAM1-3</name>
    <name type="ORF">OsI_001286</name>
</gene>
<organism>
    <name type="scientific">Oryza sativa subsp. indica</name>
    <name type="common">Rice</name>
    <dbReference type="NCBI Taxonomy" id="39946"/>
    <lineage>
        <taxon>Eukaryota</taxon>
        <taxon>Viridiplantae</taxon>
        <taxon>Streptophyta</taxon>
        <taxon>Embryophyta</taxon>
        <taxon>Tracheophyta</taxon>
        <taxon>Spermatophyta</taxon>
        <taxon>Magnoliopsida</taxon>
        <taxon>Liliopsida</taxon>
        <taxon>Poales</taxon>
        <taxon>Poaceae</taxon>
        <taxon>BOP clade</taxon>
        <taxon>Oryzoideae</taxon>
        <taxon>Oryzeae</taxon>
        <taxon>Oryzinae</taxon>
        <taxon>Oryza</taxon>
        <taxon>Oryza sativa</taxon>
    </lineage>
</organism>
<comment type="function">
    <text>Calmodulin mediates the control of a large number of enzymes, ion channels and other proteins by Ca(2+). Among the enzymes to be stimulated by the calmodulin-Ca(2+) complex are a number of protein kinases and phosphatases.</text>
</comment>
<comment type="miscellaneous">
    <text>This protein has four functional calcium-binding sites.</text>
</comment>
<comment type="similarity">
    <text evidence="4">Belongs to the calmodulin family.</text>
</comment>
<name>CALM1_ORYSI</name>
<feature type="initiator methionine" description="Removed" evidence="1">
    <location>
        <position position="1"/>
    </location>
</feature>
<feature type="chain" id="PRO_0000293081" description="Calmodulin-1">
    <location>
        <begin position="2"/>
        <end position="149"/>
    </location>
</feature>
<feature type="domain" description="EF-hand 1" evidence="2">
    <location>
        <begin position="8"/>
        <end position="43"/>
    </location>
</feature>
<feature type="domain" description="EF-hand 2" evidence="2">
    <location>
        <begin position="44"/>
        <end position="79"/>
    </location>
</feature>
<feature type="domain" description="EF-hand 3" evidence="2">
    <location>
        <begin position="81"/>
        <end position="116"/>
    </location>
</feature>
<feature type="domain" description="EF-hand 4" evidence="2">
    <location>
        <begin position="117"/>
        <end position="149"/>
    </location>
</feature>
<feature type="binding site" evidence="2">
    <location>
        <position position="21"/>
    </location>
    <ligand>
        <name>Ca(2+)</name>
        <dbReference type="ChEBI" id="CHEBI:29108"/>
        <label>1</label>
    </ligand>
</feature>
<feature type="binding site" evidence="2">
    <location>
        <position position="23"/>
    </location>
    <ligand>
        <name>Ca(2+)</name>
        <dbReference type="ChEBI" id="CHEBI:29108"/>
        <label>1</label>
    </ligand>
</feature>
<feature type="binding site" evidence="2">
    <location>
        <position position="25"/>
    </location>
    <ligand>
        <name>Ca(2+)</name>
        <dbReference type="ChEBI" id="CHEBI:29108"/>
        <label>1</label>
    </ligand>
</feature>
<feature type="binding site" evidence="2">
    <location>
        <position position="27"/>
    </location>
    <ligand>
        <name>Ca(2+)</name>
        <dbReference type="ChEBI" id="CHEBI:29108"/>
        <label>1</label>
    </ligand>
</feature>
<feature type="binding site" evidence="2">
    <location>
        <position position="32"/>
    </location>
    <ligand>
        <name>Ca(2+)</name>
        <dbReference type="ChEBI" id="CHEBI:29108"/>
        <label>1</label>
    </ligand>
</feature>
<feature type="binding site" evidence="2">
    <location>
        <position position="57"/>
    </location>
    <ligand>
        <name>Ca(2+)</name>
        <dbReference type="ChEBI" id="CHEBI:29108"/>
        <label>2</label>
    </ligand>
</feature>
<feature type="binding site" evidence="2">
    <location>
        <position position="59"/>
    </location>
    <ligand>
        <name>Ca(2+)</name>
        <dbReference type="ChEBI" id="CHEBI:29108"/>
        <label>2</label>
    </ligand>
</feature>
<feature type="binding site" evidence="2">
    <location>
        <position position="61"/>
    </location>
    <ligand>
        <name>Ca(2+)</name>
        <dbReference type="ChEBI" id="CHEBI:29108"/>
        <label>2</label>
    </ligand>
</feature>
<feature type="binding site" evidence="2">
    <location>
        <position position="63"/>
    </location>
    <ligand>
        <name>Ca(2+)</name>
        <dbReference type="ChEBI" id="CHEBI:29108"/>
        <label>2</label>
    </ligand>
</feature>
<feature type="binding site" evidence="2">
    <location>
        <position position="68"/>
    </location>
    <ligand>
        <name>Ca(2+)</name>
        <dbReference type="ChEBI" id="CHEBI:29108"/>
        <label>2</label>
    </ligand>
</feature>
<feature type="binding site" evidence="2">
    <location>
        <position position="94"/>
    </location>
    <ligand>
        <name>Ca(2+)</name>
        <dbReference type="ChEBI" id="CHEBI:29108"/>
        <label>3</label>
    </ligand>
</feature>
<feature type="binding site" evidence="2">
    <location>
        <position position="96"/>
    </location>
    <ligand>
        <name>Ca(2+)</name>
        <dbReference type="ChEBI" id="CHEBI:29108"/>
        <label>3</label>
    </ligand>
</feature>
<feature type="binding site" evidence="2">
    <location>
        <position position="98"/>
    </location>
    <ligand>
        <name>Ca(2+)</name>
        <dbReference type="ChEBI" id="CHEBI:29108"/>
        <label>3</label>
    </ligand>
</feature>
<feature type="binding site" evidence="2">
    <location>
        <position position="105"/>
    </location>
    <ligand>
        <name>Ca(2+)</name>
        <dbReference type="ChEBI" id="CHEBI:29108"/>
        <label>3</label>
    </ligand>
</feature>
<feature type="binding site" evidence="2">
    <location>
        <position position="130"/>
    </location>
    <ligand>
        <name>Ca(2+)</name>
        <dbReference type="ChEBI" id="CHEBI:29108"/>
        <label>4</label>
    </ligand>
</feature>
<feature type="binding site" evidence="2">
    <location>
        <position position="132"/>
    </location>
    <ligand>
        <name>Ca(2+)</name>
        <dbReference type="ChEBI" id="CHEBI:29108"/>
        <label>4</label>
    </ligand>
</feature>
<feature type="binding site" evidence="2">
    <location>
        <position position="134"/>
    </location>
    <ligand>
        <name>Ca(2+)</name>
        <dbReference type="ChEBI" id="CHEBI:29108"/>
        <label>4</label>
    </ligand>
</feature>
<feature type="binding site" evidence="2">
    <location>
        <position position="136"/>
    </location>
    <ligand>
        <name>Ca(2+)</name>
        <dbReference type="ChEBI" id="CHEBI:29108"/>
        <label>4</label>
    </ligand>
</feature>
<feature type="binding site" evidence="2">
    <location>
        <position position="141"/>
    </location>
    <ligand>
        <name>Ca(2+)</name>
        <dbReference type="ChEBI" id="CHEBI:29108"/>
        <label>4</label>
    </ligand>
</feature>
<feature type="modified residue" description="N-acetylalanine" evidence="1">
    <location>
        <position position="2"/>
    </location>
</feature>
<feature type="modified residue" description="N6,N6,N6-trimethyllysine" evidence="1">
    <location>
        <position position="116"/>
    </location>
</feature>
<feature type="mutagenesis site" description="Triggers activation of CAMK1; when associated with G-123 and S-127." evidence="3">
    <original>T</original>
    <variation>A</variation>
    <location>
        <position position="111"/>
    </location>
</feature>
<feature type="mutagenesis site" description="Triggers activation of CAMK1; when associated with A-111 and S-127." evidence="3">
    <original>D</original>
    <variation>G</variation>
    <location>
        <position position="123"/>
    </location>
</feature>
<feature type="mutagenesis site" description="Triggers activation of CAMK1; when associated with A-111 and G-123." evidence="3">
    <original>R</original>
    <variation>S</variation>
    <location>
        <position position="127"/>
    </location>
</feature>
<sequence length="149" mass="16832">MADQLTDDQIAEFKEAFSLFDKDGDGCITTKELGTVMRSLGQNPTEAELQDMINEVDADGNGTIDFPEFLNLMARKMKDTDSEEELKEAFRVFDKDQNGFISAAELRHVMTNLGEKLTDEEVDEMIREADVDGDGQINYEEFVKVMMAK</sequence>
<reference key="1">
    <citation type="submission" date="1992-06" db="EMBL/GenBank/DDBJ databases">
        <title>Structural organization of monocot calmodulin genes and promoter activity in transgenic tobacco plants.</title>
        <authorList>
            <person name="Choi Y."/>
            <person name="Kim S.R."/>
            <person name="Poovaiah B.W."/>
            <person name="An G."/>
        </authorList>
    </citation>
    <scope>NUCLEOTIDE SEQUENCE [GENOMIC DNA] (CAM1-2)</scope>
    <source>
        <strain>cv. IR36</strain>
    </source>
</reference>
<reference key="2">
    <citation type="journal article" date="2005" name="PLoS Biol.">
        <title>The genomes of Oryza sativa: a history of duplications.</title>
        <authorList>
            <person name="Yu J."/>
            <person name="Wang J."/>
            <person name="Lin W."/>
            <person name="Li S."/>
            <person name="Li H."/>
            <person name="Zhou J."/>
            <person name="Ni P."/>
            <person name="Dong W."/>
            <person name="Hu S."/>
            <person name="Zeng C."/>
            <person name="Zhang J."/>
            <person name="Zhang Y."/>
            <person name="Li R."/>
            <person name="Xu Z."/>
            <person name="Li S."/>
            <person name="Li X."/>
            <person name="Zheng H."/>
            <person name="Cong L."/>
            <person name="Lin L."/>
            <person name="Yin J."/>
            <person name="Geng J."/>
            <person name="Li G."/>
            <person name="Shi J."/>
            <person name="Liu J."/>
            <person name="Lv H."/>
            <person name="Li J."/>
            <person name="Wang J."/>
            <person name="Deng Y."/>
            <person name="Ran L."/>
            <person name="Shi X."/>
            <person name="Wang X."/>
            <person name="Wu Q."/>
            <person name="Li C."/>
            <person name="Ren X."/>
            <person name="Wang J."/>
            <person name="Wang X."/>
            <person name="Li D."/>
            <person name="Liu D."/>
            <person name="Zhang X."/>
            <person name="Ji Z."/>
            <person name="Zhao W."/>
            <person name="Sun Y."/>
            <person name="Zhang Z."/>
            <person name="Bao J."/>
            <person name="Han Y."/>
            <person name="Dong L."/>
            <person name="Ji J."/>
            <person name="Chen P."/>
            <person name="Wu S."/>
            <person name="Liu J."/>
            <person name="Xiao Y."/>
            <person name="Bu D."/>
            <person name="Tan J."/>
            <person name="Yang L."/>
            <person name="Ye C."/>
            <person name="Zhang J."/>
            <person name="Xu J."/>
            <person name="Zhou Y."/>
            <person name="Yu Y."/>
            <person name="Zhang B."/>
            <person name="Zhuang S."/>
            <person name="Wei H."/>
            <person name="Liu B."/>
            <person name="Lei M."/>
            <person name="Yu H."/>
            <person name="Li Y."/>
            <person name="Xu H."/>
            <person name="Wei S."/>
            <person name="He X."/>
            <person name="Fang L."/>
            <person name="Zhang Z."/>
            <person name="Zhang Y."/>
            <person name="Huang X."/>
            <person name="Su Z."/>
            <person name="Tong W."/>
            <person name="Li J."/>
            <person name="Tong Z."/>
            <person name="Li S."/>
            <person name="Ye J."/>
            <person name="Wang L."/>
            <person name="Fang L."/>
            <person name="Lei T."/>
            <person name="Chen C.-S."/>
            <person name="Chen H.-C."/>
            <person name="Xu Z."/>
            <person name="Li H."/>
            <person name="Huang H."/>
            <person name="Zhang F."/>
            <person name="Xu H."/>
            <person name="Li N."/>
            <person name="Zhao C."/>
            <person name="Li S."/>
            <person name="Dong L."/>
            <person name="Huang Y."/>
            <person name="Li L."/>
            <person name="Xi Y."/>
            <person name="Qi Q."/>
            <person name="Li W."/>
            <person name="Zhang B."/>
            <person name="Hu W."/>
            <person name="Zhang Y."/>
            <person name="Tian X."/>
            <person name="Jiao Y."/>
            <person name="Liang X."/>
            <person name="Jin J."/>
            <person name="Gao L."/>
            <person name="Zheng W."/>
            <person name="Hao B."/>
            <person name="Liu S.-M."/>
            <person name="Wang W."/>
            <person name="Yuan L."/>
            <person name="Cao M."/>
            <person name="McDermott J."/>
            <person name="Samudrala R."/>
            <person name="Wang J."/>
            <person name="Wong G.K.-S."/>
            <person name="Yang H."/>
        </authorList>
    </citation>
    <scope>NUCLEOTIDE SEQUENCE [LARGE SCALE GENOMIC DNA] (CAM1-1; CAM1-2 AND CAM1-3)</scope>
    <source>
        <strain>cv. 93-11</strain>
    </source>
</reference>
<reference key="3">
    <citation type="submission" date="2007-04" db="EMBL/GenBank/DDBJ databases">
        <title>A comparative transcriptome map of early and late salinity stress responses in contrasting genotypes of Oryza sativa L.</title>
        <authorList>
            <person name="Kumari S."/>
            <person name="Panjabi V."/>
            <person name="Singla-Pareek S.L."/>
            <person name="Sopory S.K."/>
            <person name="Pareek A."/>
        </authorList>
    </citation>
    <scope>NUCLEOTIDE SEQUENCE [LARGE SCALE MRNA] (CAM1-1)</scope>
    <source>
        <strain>cv. Pokkali</strain>
        <tissue>Root</tissue>
    </source>
</reference>
<reference key="4">
    <citation type="journal article" date="2006" name="FEBS Lett.">
        <title>Calmodulin isoform-specific activation of a rice calmodulin-binding kinase conferred by only three amino-acids of OsCaM61.</title>
        <authorList>
            <person name="Li D.-F."/>
            <person name="Li J."/>
            <person name="Ma L."/>
            <person name="Zhang L."/>
            <person name="Lu Y.-T."/>
        </authorList>
    </citation>
    <scope>MUTAGENESIS OF THR-111; ASP-123 AND ARG-127</scope>
</reference>
<reference key="5">
    <citation type="journal article" date="2007" name="BMC Plant Biol.">
        <title>Genome-wide identification and analyses of the rice calmodulin and related potential calcium sensor proteins.</title>
        <authorList>
            <person name="Boonburapong B."/>
            <person name="Buaboocha T."/>
        </authorList>
    </citation>
    <scope>GENE FAMILY</scope>
    <scope>NOMENCLATURE</scope>
</reference>
<accession>A2WN93</accession>
<accession>A2XG28</accession>
<accession>A2YQ37</accession>
<accession>A6N0J2</accession>
<accession>O49184</accession>
<accession>P29612</accession>
<accession>Q7F8I8</accession>
<dbReference type="EMBL" id="Z12827">
    <property type="protein sequence ID" value="CAA78287.1"/>
    <property type="molecule type" value="Genomic_DNA"/>
</dbReference>
<dbReference type="EMBL" id="L18913">
    <property type="protein sequence ID" value="AAA33901.1"/>
    <property type="molecule type" value="Genomic_DNA"/>
</dbReference>
<dbReference type="EMBL" id="CM000128">
    <property type="protein sequence ID" value="EAY89788.1"/>
    <property type="molecule type" value="Genomic_DNA"/>
</dbReference>
<dbReference type="EMBL" id="CM000132">
    <property type="status" value="NOT_ANNOTATED_CDS"/>
    <property type="molecule type" value="Genomic_DNA"/>
</dbReference>
<dbReference type="EMBL" id="CM000126">
    <property type="status" value="NOT_ANNOTATED_CDS"/>
    <property type="molecule type" value="Genomic_DNA"/>
</dbReference>
<dbReference type="EMBL" id="EF576174">
    <property type="protein sequence ID" value="ABR25762.1"/>
    <property type="molecule type" value="mRNA"/>
</dbReference>
<dbReference type="PIR" id="S24952">
    <property type="entry name" value="S24952"/>
</dbReference>
<dbReference type="SMR" id="A2WN93"/>
<dbReference type="IntAct" id="A2WN93">
    <property type="interactions" value="1"/>
</dbReference>
<dbReference type="MINT" id="A2WN93"/>
<dbReference type="STRING" id="39946.A2WN93"/>
<dbReference type="iPTMnet" id="A2WN93"/>
<dbReference type="EnsemblPlants" id="BGIOSGA001926-TA">
    <property type="protein sequence ID" value="BGIOSGA001926-PA"/>
    <property type="gene ID" value="BGIOSGA001926"/>
</dbReference>
<dbReference type="EnsemblPlants" id="BGIOSGA012515-TA">
    <property type="protein sequence ID" value="BGIOSGA012515-PA"/>
    <property type="gene ID" value="BGIOSGA012515"/>
</dbReference>
<dbReference type="EnsemblPlants" id="BGIOSGA023690-TA">
    <property type="protein sequence ID" value="BGIOSGA023690-PA"/>
    <property type="gene ID" value="BGIOSGA023690"/>
</dbReference>
<dbReference type="EnsemblPlants" id="OsGoSa_03g0015570.01">
    <property type="protein sequence ID" value="OsGoSa_03g0015570.01"/>
    <property type="gene ID" value="OsGoSa_03g0015570"/>
</dbReference>
<dbReference type="EnsemblPlants" id="OsKYG_01g0011400.01">
    <property type="protein sequence ID" value="OsKYG_01g0011400.01"/>
    <property type="gene ID" value="OsKYG_01g0011400"/>
</dbReference>
<dbReference type="EnsemblPlants" id="OsLaMu_01g0011320.01">
    <property type="protein sequence ID" value="OsLaMu_01g0011320.01"/>
    <property type="gene ID" value="OsLaMu_01g0011320"/>
</dbReference>
<dbReference type="EnsemblPlants" id="OsLaMu_03g0015390.01">
    <property type="protein sequence ID" value="OsLaMu_03g0015390.01"/>
    <property type="gene ID" value="OsLaMu_03g0015390"/>
</dbReference>
<dbReference type="EnsemblPlants" id="OsLima_03g0015520.01">
    <property type="protein sequence ID" value="OsLima_03g0015520.01"/>
    <property type="gene ID" value="OsLima_03g0015520"/>
</dbReference>
<dbReference type="EnsemblPlants" id="OsPr106_01g0011380.01">
    <property type="protein sequence ID" value="OsPr106_01g0011380.01"/>
    <property type="gene ID" value="OsPr106_01g0011380"/>
</dbReference>
<dbReference type="EnsemblPlants" id="OsPr106_03g0015390.01">
    <property type="protein sequence ID" value="OsPr106_03g0015390.01"/>
    <property type="gene ID" value="OsPr106_03g0015390"/>
</dbReference>
<dbReference type="EnsemblPlants" id="OsZS97_01G011240_01">
    <property type="protein sequence ID" value="OsZS97_01G011240_01"/>
    <property type="gene ID" value="OsZS97_01G011240"/>
</dbReference>
<dbReference type="EnsemblPlants" id="OsZS97_03G015420_01">
    <property type="protein sequence ID" value="OsZS97_03G015420_01"/>
    <property type="gene ID" value="OsZS97_03G015420"/>
</dbReference>
<dbReference type="EnsemblPlants" id="OsZS97_07G027760_01">
    <property type="protein sequence ID" value="OsZS97_07G027760_01"/>
    <property type="gene ID" value="OsZS97_07G027760"/>
</dbReference>
<dbReference type="EnsemblPlants" id="OsZS97_07G027760_02">
    <property type="protein sequence ID" value="OsZS97_07G027760_02"/>
    <property type="gene ID" value="OsZS97_07G027760"/>
</dbReference>
<dbReference type="Gramene" id="BGIOSGA001926-TA">
    <property type="protein sequence ID" value="BGIOSGA001926-PA"/>
    <property type="gene ID" value="BGIOSGA001926"/>
</dbReference>
<dbReference type="Gramene" id="BGIOSGA012515-TA">
    <property type="protein sequence ID" value="BGIOSGA012515-PA"/>
    <property type="gene ID" value="BGIOSGA012515"/>
</dbReference>
<dbReference type="Gramene" id="BGIOSGA023690-TA">
    <property type="protein sequence ID" value="BGIOSGA023690-PA"/>
    <property type="gene ID" value="BGIOSGA023690"/>
</dbReference>
<dbReference type="Gramene" id="OsGoSa_03g0015570.01">
    <property type="protein sequence ID" value="OsGoSa_03g0015570.01"/>
    <property type="gene ID" value="OsGoSa_03g0015570"/>
</dbReference>
<dbReference type="Gramene" id="OsKYG_01g0011400.01">
    <property type="protein sequence ID" value="OsKYG_01g0011400.01"/>
    <property type="gene ID" value="OsKYG_01g0011400"/>
</dbReference>
<dbReference type="Gramene" id="OsLaMu_01g0011320.01">
    <property type="protein sequence ID" value="OsLaMu_01g0011320.01"/>
    <property type="gene ID" value="OsLaMu_01g0011320"/>
</dbReference>
<dbReference type="Gramene" id="OsLaMu_03g0015390.01">
    <property type="protein sequence ID" value="OsLaMu_03g0015390.01"/>
    <property type="gene ID" value="OsLaMu_03g0015390"/>
</dbReference>
<dbReference type="Gramene" id="OsLima_03g0015520.01">
    <property type="protein sequence ID" value="OsLima_03g0015520.01"/>
    <property type="gene ID" value="OsLima_03g0015520"/>
</dbReference>
<dbReference type="Gramene" id="OsPr106_01g0011380.01">
    <property type="protein sequence ID" value="OsPr106_01g0011380.01"/>
    <property type="gene ID" value="OsPr106_01g0011380"/>
</dbReference>
<dbReference type="Gramene" id="OsPr106_03g0015390.01">
    <property type="protein sequence ID" value="OsPr106_03g0015390.01"/>
    <property type="gene ID" value="OsPr106_03g0015390"/>
</dbReference>
<dbReference type="Gramene" id="OsZS97_01G011240_01">
    <property type="protein sequence ID" value="OsZS97_01G011240_01"/>
    <property type="gene ID" value="OsZS97_01G011240"/>
</dbReference>
<dbReference type="Gramene" id="OsZS97_03G015420_01">
    <property type="protein sequence ID" value="OsZS97_03G015420_01"/>
    <property type="gene ID" value="OsZS97_03G015420"/>
</dbReference>
<dbReference type="Gramene" id="OsZS97_07G027760_01">
    <property type="protein sequence ID" value="OsZS97_07G027760_01"/>
    <property type="gene ID" value="OsZS97_07G027760"/>
</dbReference>
<dbReference type="Gramene" id="OsZS97_07G027760_02">
    <property type="protein sequence ID" value="OsZS97_07G027760_02"/>
    <property type="gene ID" value="OsZS97_07G027760"/>
</dbReference>
<dbReference type="HOGENOM" id="CLU_061288_2_0_1"/>
<dbReference type="OMA" id="RIDCESI"/>
<dbReference type="OrthoDB" id="727752at2759"/>
<dbReference type="Proteomes" id="UP000007015">
    <property type="component" value="Chromosome 1"/>
</dbReference>
<dbReference type="Proteomes" id="UP000007015">
    <property type="component" value="Chromosome 3"/>
</dbReference>
<dbReference type="Proteomes" id="UP000007015">
    <property type="component" value="Chromosome 7"/>
</dbReference>
<dbReference type="ExpressionAtlas" id="A2WN93">
    <property type="expression patterns" value="differential"/>
</dbReference>
<dbReference type="GO" id="GO:0016460">
    <property type="term" value="C:myosin II complex"/>
    <property type="evidence" value="ECO:0007669"/>
    <property type="project" value="TreeGrafter"/>
</dbReference>
<dbReference type="GO" id="GO:0005509">
    <property type="term" value="F:calcium ion binding"/>
    <property type="evidence" value="ECO:0007669"/>
    <property type="project" value="InterPro"/>
</dbReference>
<dbReference type="CDD" id="cd00051">
    <property type="entry name" value="EFh"/>
    <property type="match status" value="2"/>
</dbReference>
<dbReference type="FunFam" id="1.10.238.10:FF:000034">
    <property type="entry name" value="Calmodulin"/>
    <property type="match status" value="1"/>
</dbReference>
<dbReference type="FunFam" id="1.10.238.10:FF:000042">
    <property type="entry name" value="Calmodulin"/>
    <property type="match status" value="1"/>
</dbReference>
<dbReference type="Gene3D" id="1.10.238.10">
    <property type="entry name" value="EF-hand"/>
    <property type="match status" value="3"/>
</dbReference>
<dbReference type="InterPro" id="IPR050230">
    <property type="entry name" value="CALM/Myosin/TropC-like"/>
</dbReference>
<dbReference type="InterPro" id="IPR011992">
    <property type="entry name" value="EF-hand-dom_pair"/>
</dbReference>
<dbReference type="InterPro" id="IPR018247">
    <property type="entry name" value="EF_Hand_1_Ca_BS"/>
</dbReference>
<dbReference type="InterPro" id="IPR002048">
    <property type="entry name" value="EF_hand_dom"/>
</dbReference>
<dbReference type="PANTHER" id="PTHR23048:SF53">
    <property type="entry name" value="CALMODULIN"/>
    <property type="match status" value="1"/>
</dbReference>
<dbReference type="PANTHER" id="PTHR23048">
    <property type="entry name" value="MYOSIN LIGHT CHAIN 1, 3"/>
    <property type="match status" value="1"/>
</dbReference>
<dbReference type="Pfam" id="PF13499">
    <property type="entry name" value="EF-hand_7"/>
    <property type="match status" value="2"/>
</dbReference>
<dbReference type="SMART" id="SM00054">
    <property type="entry name" value="EFh"/>
    <property type="match status" value="4"/>
</dbReference>
<dbReference type="SUPFAM" id="SSF47473">
    <property type="entry name" value="EF-hand"/>
    <property type="match status" value="1"/>
</dbReference>
<dbReference type="PROSITE" id="PS00018">
    <property type="entry name" value="EF_HAND_1"/>
    <property type="match status" value="4"/>
</dbReference>
<dbReference type="PROSITE" id="PS50222">
    <property type="entry name" value="EF_HAND_2"/>
    <property type="match status" value="4"/>
</dbReference>